<feature type="chain" id="PRO_0000076366" description="YEATS domain-containing protein 2">
    <location>
        <begin position="1"/>
        <end position="1422"/>
    </location>
</feature>
<feature type="domain" description="YEATS" evidence="3">
    <location>
        <begin position="200"/>
        <end position="345"/>
    </location>
</feature>
<feature type="region of interest" description="Disordered" evidence="4">
    <location>
        <begin position="117"/>
        <end position="198"/>
    </location>
</feature>
<feature type="region of interest" description="Histone H3K27cr binding" evidence="8 15">
    <location>
        <begin position="259"/>
        <end position="261"/>
    </location>
</feature>
<feature type="region of interest" description="Histone H3K27cr binding" evidence="8 15">
    <location>
        <begin position="282"/>
        <end position="284"/>
    </location>
</feature>
<feature type="region of interest" description="Disordered" evidence="4">
    <location>
        <begin position="465"/>
        <end position="486"/>
    </location>
</feature>
<feature type="region of interest" description="Disordered" evidence="4">
    <location>
        <begin position="513"/>
        <end position="540"/>
    </location>
</feature>
<feature type="region of interest" description="Disordered" evidence="4">
    <location>
        <begin position="794"/>
        <end position="842"/>
    </location>
</feature>
<feature type="coiled-coil region" evidence="2">
    <location>
        <begin position="47"/>
        <end position="80"/>
    </location>
</feature>
<feature type="compositionally biased region" description="Polar residues" evidence="4">
    <location>
        <begin position="119"/>
        <end position="148"/>
    </location>
</feature>
<feature type="compositionally biased region" description="Basic and acidic residues" evidence="4">
    <location>
        <begin position="149"/>
        <end position="165"/>
    </location>
</feature>
<feature type="compositionally biased region" description="Polar residues" evidence="4">
    <location>
        <begin position="166"/>
        <end position="176"/>
    </location>
</feature>
<feature type="compositionally biased region" description="Basic and acidic residues" evidence="4">
    <location>
        <begin position="177"/>
        <end position="198"/>
    </location>
</feature>
<feature type="compositionally biased region" description="Polar residues" evidence="4">
    <location>
        <begin position="513"/>
        <end position="535"/>
    </location>
</feature>
<feature type="compositionally biased region" description="Gly residues" evidence="4">
    <location>
        <begin position="797"/>
        <end position="842"/>
    </location>
</feature>
<feature type="modified residue" description="Phosphoserine" evidence="16">
    <location>
        <position position="118"/>
    </location>
</feature>
<feature type="modified residue" description="Phosphoserine" evidence="1">
    <location>
        <position position="120"/>
    </location>
</feature>
<feature type="modified residue" description="Phosphoserine" evidence="20">
    <location>
        <position position="157"/>
    </location>
</feature>
<feature type="modified residue" description="Phosphothreonine" evidence="20">
    <location>
        <position position="407"/>
    </location>
</feature>
<feature type="modified residue" description="Phosphoserine" evidence="18 19 20">
    <location>
        <position position="447"/>
    </location>
</feature>
<feature type="modified residue" description="Phosphoserine" evidence="18">
    <location>
        <position position="463"/>
    </location>
</feature>
<feature type="modified residue" description="Phosphoserine" evidence="18 20">
    <location>
        <position position="465"/>
    </location>
</feature>
<feature type="modified residue" description="Phosphoserine" evidence="18">
    <location>
        <position position="471"/>
    </location>
</feature>
<feature type="modified residue" description="Phosphoserine" evidence="18 20">
    <location>
        <position position="473"/>
    </location>
</feature>
<feature type="modified residue" description="Phosphothreonine" evidence="21">
    <location>
        <position position="478"/>
    </location>
</feature>
<feature type="modified residue" description="Phosphoserine" evidence="17 19 20">
    <location>
        <position position="536"/>
    </location>
</feature>
<feature type="modified residue" description="Phosphoserine" evidence="18 20">
    <location>
        <position position="575"/>
    </location>
</feature>
<feature type="modified residue" description="Phosphoserine" evidence="18 20">
    <location>
        <position position="627"/>
    </location>
</feature>
<feature type="modified residue" description="Phosphothreonine" evidence="20">
    <location>
        <position position="1219"/>
    </location>
</feature>
<feature type="cross-link" description="Glycyl lysine isopeptide (Lys-Gly) (interchain with G-Cter in SUMO2)" evidence="24">
    <location>
        <position position="9"/>
    </location>
</feature>
<feature type="cross-link" description="Glycyl lysine isopeptide (Lys-Gly) (interchain with G-Cter in SUMO2)" evidence="24">
    <location>
        <position position="113"/>
    </location>
</feature>
<feature type="cross-link" description="Glycyl lysine isopeptide (Lys-Gly) (interchain with G-Cter in SUMO2)" evidence="24">
    <location>
        <position position="189"/>
    </location>
</feature>
<feature type="cross-link" description="Glycyl lysine isopeptide (Lys-Gly) (interchain with G-Cter in SUMO2)" evidence="24">
    <location>
        <position position="370"/>
    </location>
</feature>
<feature type="cross-link" description="Glycyl lysine isopeptide (Lys-Gly) (interchain with G-Cter in SUMO2)" evidence="24">
    <location>
        <position position="487"/>
    </location>
</feature>
<feature type="cross-link" description="Glycyl lysine isopeptide (Lys-Gly) (interchain with G-Cter in SUMO2)" evidence="24">
    <location>
        <position position="552"/>
    </location>
</feature>
<feature type="cross-link" description="Glycyl lysine isopeptide (Lys-Gly) (interchain with G-Cter in SUMO2)" evidence="23 24">
    <location>
        <position position="592"/>
    </location>
</feature>
<feature type="cross-link" description="Glycyl lysine isopeptide (Lys-Gly) (interchain with G-Cter in SUMO2)" evidence="24">
    <location>
        <position position="649"/>
    </location>
</feature>
<feature type="cross-link" description="Glycyl lysine isopeptide (Lys-Gly) (interchain with G-Cter in SUMO2)" evidence="24">
    <location>
        <position position="773"/>
    </location>
</feature>
<feature type="cross-link" description="Glycyl lysine isopeptide (Lys-Gly) (interchain with G-Cter in SUMO2)" evidence="24">
    <location>
        <position position="923"/>
    </location>
</feature>
<feature type="cross-link" description="Glycyl lysine isopeptide (Lys-Gly) (interchain with G-Cter in SUMO1); alternate" evidence="22">
    <location>
        <position position="1110"/>
    </location>
</feature>
<feature type="cross-link" description="Glycyl lysine isopeptide (Lys-Gly) (interchain with G-Cter in SUMO2); alternate" evidence="23 24">
    <location>
        <position position="1110"/>
    </location>
</feature>
<feature type="cross-link" description="Glycyl lysine isopeptide (Lys-Gly) (interchain with G-Cter in SUMO2)" evidence="24">
    <location>
        <position position="1130"/>
    </location>
</feature>
<feature type="cross-link" description="Glycyl lysine isopeptide (Lys-Gly) (interchain with G-Cter in SUMO2)" evidence="24">
    <location>
        <position position="1222"/>
    </location>
</feature>
<feature type="cross-link" description="Glycyl lysine isopeptide (Lys-Gly) (interchain with G-Cter in SUMO2)" evidence="24">
    <location>
        <position position="1285"/>
    </location>
</feature>
<feature type="sequence variant" id="VAR_051494" description="In dbSNP:rs16858033.">
    <original>I</original>
    <variation>V</variation>
    <location>
        <position position="184"/>
    </location>
</feature>
<feature type="sequence variant" id="VAR_051495" description="In dbSNP:rs262993.">
    <original>V</original>
    <variation>I</variation>
    <location>
        <position position="530"/>
    </location>
</feature>
<feature type="sequence variant" id="VAR_051496" description="In dbSNP:rs3211095.">
    <original>Q</original>
    <variation>H</variation>
    <location>
        <position position="993"/>
    </location>
</feature>
<feature type="mutagenesis site" description="Strongly reduced binding to histone H3 crotonylated at 'Lys-27' (H3K27cr)." evidence="8">
    <original>H</original>
    <variation>A</variation>
    <location>
        <position position="259"/>
    </location>
</feature>
<feature type="mutagenesis site" description="Strongly reduced binding to histone H3 crotonylated at 'Lys-27' (H3K27cr)." evidence="8">
    <original>S</original>
    <variation>A</variation>
    <location>
        <position position="261"/>
    </location>
</feature>
<feature type="mutagenesis site" description="Strongly reduced binding to histone H3 crotonylated at 'Lys-27' (H3K27cr)." evidence="8">
    <original>Y</original>
    <variation>A</variation>
    <location>
        <position position="262"/>
    </location>
</feature>
<feature type="mutagenesis site" description="Strongly reduced binding to histone H3 crotonylated at 'Lys-27' (H3K27cr)." evidence="8">
    <original>W</original>
    <variation>A</variation>
    <location>
        <position position="282"/>
    </location>
</feature>
<feature type="mutagenesis site" description="Abolished binding to histone H3 crotonylated at 'Lys-27' (H3K27cr)." evidence="8">
    <original>G</original>
    <variation>A</variation>
    <location>
        <position position="283"/>
    </location>
</feature>
<feature type="mutagenesis site" description="Abolished binding to histone H3 crotonylated at 'Lys-27' (H3K27cr)." evidence="8">
    <original>E</original>
    <variation>A</variation>
    <location>
        <position position="284"/>
    </location>
</feature>
<feature type="mutagenesis site" description="Strongly reduced binding to histone H3 crotonylated at 'Lys-27' (H3K27cr)." evidence="8">
    <original>F</original>
    <variation>A</variation>
    <location>
        <position position="285"/>
    </location>
</feature>
<feature type="mutagenesis site" description="Reduced binding to histone H3 crotonylated at 'Lys-27' (H3K27cr)." evidence="8">
    <original>Y</original>
    <variation>A</variation>
    <location>
        <position position="313"/>
    </location>
</feature>
<feature type="strand" evidence="25">
    <location>
        <begin position="208"/>
        <end position="218"/>
    </location>
</feature>
<feature type="helix" evidence="25">
    <location>
        <begin position="221"/>
        <end position="223"/>
    </location>
</feature>
<feature type="strand" evidence="25">
    <location>
        <begin position="232"/>
        <end position="239"/>
    </location>
</feature>
<feature type="turn" evidence="25">
    <location>
        <begin position="248"/>
        <end position="250"/>
    </location>
</feature>
<feature type="strand" evidence="25">
    <location>
        <begin position="251"/>
        <end position="257"/>
    </location>
</feature>
<feature type="helix" evidence="25">
    <location>
        <begin position="260"/>
        <end position="262"/>
    </location>
</feature>
<feature type="strand" evidence="25">
    <location>
        <begin position="267"/>
        <end position="270"/>
    </location>
</feature>
<feature type="strand" evidence="25">
    <location>
        <begin position="272"/>
        <end position="283"/>
    </location>
</feature>
<feature type="strand" evidence="25">
    <location>
        <begin position="286"/>
        <end position="294"/>
    </location>
</feature>
<feature type="strand" evidence="25">
    <location>
        <begin position="300"/>
        <end position="306"/>
    </location>
</feature>
<feature type="strand" evidence="25">
    <location>
        <begin position="314"/>
        <end position="316"/>
    </location>
</feature>
<feature type="strand" evidence="25">
    <location>
        <begin position="318"/>
        <end position="327"/>
    </location>
</feature>
<protein>
    <recommendedName>
        <fullName evidence="11">YEATS domain-containing protein 2</fullName>
    </recommendedName>
</protein>
<name>YETS2_HUMAN</name>
<organism>
    <name type="scientific">Homo sapiens</name>
    <name type="common">Human</name>
    <dbReference type="NCBI Taxonomy" id="9606"/>
    <lineage>
        <taxon>Eukaryota</taxon>
        <taxon>Metazoa</taxon>
        <taxon>Chordata</taxon>
        <taxon>Craniata</taxon>
        <taxon>Vertebrata</taxon>
        <taxon>Euteleostomi</taxon>
        <taxon>Mammalia</taxon>
        <taxon>Eutheria</taxon>
        <taxon>Euarchontoglires</taxon>
        <taxon>Primates</taxon>
        <taxon>Haplorrhini</taxon>
        <taxon>Catarrhini</taxon>
        <taxon>Hominidae</taxon>
        <taxon>Homo</taxon>
    </lineage>
</organism>
<sequence length="1422" mass="150782">MSGIKRTIKETDPDYEDVSVALPNKRHKAIENSARDAAVQKIETIIKEQFALEMKNKEHEIEVIDQRLIEARRMMDKLRACIVANYYASAGLLKVSEGSKTCDTMVFNHPAIKKFLESPSRSSSPANQRAETPSANHSESDSLSQHNDFLSDKDNNSNMDIEERLSNNMEQRPSRNTGRDTSRITGSHKTEQRNADLTDETSRLFVKKTIVVGNVSKYIPPDKREENDQSTHKWMVYVRGSRREPSINHFVKKVWFFLHPSYKPNDLVEVREPPFHLTRRGWGEFPVRVQVHFKDSQNKRIDIIHNLKLDRTYTGLQTLGAETVVDVELHRHSLGEDCIYPQSSESDISDAPPSLPLTIPAPVKASSPIKQSHEPVPDTSVEKGFPASTEAERHTPFYALPSSLERTPTKMTTSQKVTFCSHGNSAFQPIASSCKIVPQSQVPNPESPGKSFQPITMSCKIVSGSPISTPSPSPLPRTPTSTPVHVKQGTAGSVINNPYVIMDKQPGQVIGATTPSTGSPTNKISTASQVSQGTGSPVPKIHGSSFVTSTVKQEDSLFASMPPLCPIGSHPKVQSPKPITGGLGAFTKVIIKQEPGEAPHVPATGAASQSPLPQYVTVKGGHMIAVSPQKQVITPGEGIAQSAKVQPSKVVGVPVGSALPSTVKQAVAISGGQILVAKASSSVSKAVGPKQVVTQGVAKAIVSGGGGTIVAQPVQTLTKAQVTAAGPQKSGSQGSVMATLQLPATNLANLANLPPGTKLYLTTNSKNPSGKGKLLLIPQGAILRATNNANLQSGSAASGGSGAGGGGGGGGGGGSGSGGGGSTGGGGGTAGGGTQSTAGPGGISQHLTYTSYILKQTPQGTFLVGQPSPQTSGKQLTTGSVVQGTLGVSTSSAQGQQTLKVISGQKTTLFTQAAHGGQASLMKISDSTLKTVPATSQLSKPGTTMLRVAGGVITTATSPAVALSANGPAQQSEGMAPVSSSTVSSVTKTSGQQQVCVSQATVGTCKAATPTVVSATSLVPTPNPISGKATVSGLLKIHSSQSSPQQAVLTIPSQLKPLSVNTSGGVQTILMPVNKVVQSFSTSKPPAILPVAAPTPVVPSSAPAAVAKVKTEPETPGPSCLSQEGQTAVKTEESSELGNYVIKIDHLETIQQLLTAVVKKIPLITAKSEDASCFSAKSVEQYYGWNIGKRRAAEWQRAMTMRKVLQEILEKNPRFHHLTPLKTKHIAHWCRCHGYTPPDPESLRNDGDSIEDVLTQIDSEPECPSSFSSADNLCRKLEDLQQFQKREPENEEEVDILSLSEPVKINIKKEQEEKQEEVKFYLPPTPGSEFIGDVTQKIGITLQPVALHRNVYASVVEDMILKATEQLVNDILRQALAVGYQTASHNRIPKEITVSNIHQAICNIPFLDFLTNKHMGILNEDQ</sequence>
<dbReference type="EMBL" id="AB033023">
    <property type="protein sequence ID" value="BAA86511.1"/>
    <property type="status" value="ALT_INIT"/>
    <property type="molecule type" value="mRNA"/>
</dbReference>
<dbReference type="EMBL" id="AC068769">
    <property type="status" value="NOT_ANNOTATED_CDS"/>
    <property type="molecule type" value="Genomic_DNA"/>
</dbReference>
<dbReference type="EMBL" id="AC131160">
    <property type="status" value="NOT_ANNOTATED_CDS"/>
    <property type="molecule type" value="Genomic_DNA"/>
</dbReference>
<dbReference type="EMBL" id="CH471052">
    <property type="protein sequence ID" value="EAW78316.1"/>
    <property type="molecule type" value="Genomic_DNA"/>
</dbReference>
<dbReference type="EMBL" id="CH471052">
    <property type="protein sequence ID" value="EAW78317.1"/>
    <property type="molecule type" value="Genomic_DNA"/>
</dbReference>
<dbReference type="EMBL" id="BC082270">
    <property type="protein sequence ID" value="AAH82270.1"/>
    <property type="molecule type" value="mRNA"/>
</dbReference>
<dbReference type="EMBL" id="BC150273">
    <property type="protein sequence ID" value="AAI50274.1"/>
    <property type="molecule type" value="mRNA"/>
</dbReference>
<dbReference type="CCDS" id="CCDS43175.1"/>
<dbReference type="RefSeq" id="NP_001338298.1">
    <property type="nucleotide sequence ID" value="NM_001351369.2"/>
</dbReference>
<dbReference type="RefSeq" id="NP_060493.3">
    <property type="nucleotide sequence ID" value="NM_018023.4"/>
</dbReference>
<dbReference type="RefSeq" id="XP_016862298.1">
    <property type="nucleotide sequence ID" value="XM_017006809.1"/>
</dbReference>
<dbReference type="RefSeq" id="XP_016862299.1">
    <property type="nucleotide sequence ID" value="XM_017006810.2"/>
</dbReference>
<dbReference type="RefSeq" id="XP_047304484.1">
    <property type="nucleotide sequence ID" value="XM_047448528.1"/>
</dbReference>
<dbReference type="PDB" id="5IQL">
    <property type="method" value="X-ray"/>
    <property type="resolution" value="2.10 A"/>
    <property type="chains" value="A=201-332"/>
</dbReference>
<dbReference type="PDB" id="5XNV">
    <property type="method" value="X-ray"/>
    <property type="resolution" value="2.70 A"/>
    <property type="chains" value="A=201-332"/>
</dbReference>
<dbReference type="PDB" id="6LSD">
    <property type="method" value="X-ray"/>
    <property type="resolution" value="2.05 A"/>
    <property type="chains" value="A/B=201-332"/>
</dbReference>
<dbReference type="PDB" id="7EIE">
    <property type="method" value="X-ray"/>
    <property type="resolution" value="1.67 A"/>
    <property type="chains" value="A/B=202-329"/>
</dbReference>
<dbReference type="PDBsum" id="5IQL"/>
<dbReference type="PDBsum" id="5XNV"/>
<dbReference type="PDBsum" id="6LSD"/>
<dbReference type="PDBsum" id="7EIE"/>
<dbReference type="SMR" id="Q9ULM3"/>
<dbReference type="BioGRID" id="120815">
    <property type="interactions" value="181"/>
</dbReference>
<dbReference type="ComplexPortal" id="CPX-1004">
    <property type="entry name" value="PCAF-containing ATAC complex"/>
</dbReference>
<dbReference type="ComplexPortal" id="CPX-997">
    <property type="entry name" value="GCN5-containing ATAC complex"/>
</dbReference>
<dbReference type="CORUM" id="Q9ULM3"/>
<dbReference type="FunCoup" id="Q9ULM3">
    <property type="interactions" value="1068"/>
</dbReference>
<dbReference type="IntAct" id="Q9ULM3">
    <property type="interactions" value="86"/>
</dbReference>
<dbReference type="MINT" id="Q9ULM3"/>
<dbReference type="STRING" id="9606.ENSP00000306983"/>
<dbReference type="BindingDB" id="Q9ULM3"/>
<dbReference type="ChEMBL" id="CHEMBL4296261"/>
<dbReference type="GlyCosmos" id="Q9ULM3">
    <property type="glycosylation" value="5 sites, 2 glycans"/>
</dbReference>
<dbReference type="GlyGen" id="Q9ULM3">
    <property type="glycosylation" value="37 sites, 2 O-linked glycans (35 sites)"/>
</dbReference>
<dbReference type="iPTMnet" id="Q9ULM3"/>
<dbReference type="PhosphoSitePlus" id="Q9ULM3"/>
<dbReference type="BioMuta" id="YEATS2"/>
<dbReference type="DMDM" id="85542165"/>
<dbReference type="jPOST" id="Q9ULM3"/>
<dbReference type="MassIVE" id="Q9ULM3"/>
<dbReference type="PaxDb" id="9606-ENSP00000306983"/>
<dbReference type="PeptideAtlas" id="Q9ULM3"/>
<dbReference type="ProteomicsDB" id="85078"/>
<dbReference type="Pumba" id="Q9ULM3"/>
<dbReference type="Antibodypedia" id="50874">
    <property type="antibodies" value="92 antibodies from 26 providers"/>
</dbReference>
<dbReference type="DNASU" id="55689"/>
<dbReference type="Ensembl" id="ENST00000305135.10">
    <property type="protein sequence ID" value="ENSP00000306983.5"/>
    <property type="gene ID" value="ENSG00000163872.16"/>
</dbReference>
<dbReference type="GeneID" id="55689"/>
<dbReference type="KEGG" id="hsa:55689"/>
<dbReference type="MANE-Select" id="ENST00000305135.10">
    <property type="protein sequence ID" value="ENSP00000306983.5"/>
    <property type="RefSeq nucleotide sequence ID" value="NM_018023.5"/>
    <property type="RefSeq protein sequence ID" value="NP_060493.3"/>
</dbReference>
<dbReference type="UCSC" id="uc003fly.2">
    <property type="organism name" value="human"/>
</dbReference>
<dbReference type="AGR" id="HGNC:25489"/>
<dbReference type="CTD" id="55689"/>
<dbReference type="DisGeNET" id="55689"/>
<dbReference type="GeneCards" id="YEATS2"/>
<dbReference type="HGNC" id="HGNC:25489">
    <property type="gene designation" value="YEATS2"/>
</dbReference>
<dbReference type="HPA" id="ENSG00000163872">
    <property type="expression patterns" value="Low tissue specificity"/>
</dbReference>
<dbReference type="MalaCards" id="YEATS2"/>
<dbReference type="MIM" id="613373">
    <property type="type" value="gene"/>
</dbReference>
<dbReference type="MIM" id="615127">
    <property type="type" value="phenotype"/>
</dbReference>
<dbReference type="neXtProt" id="NX_Q9ULM3"/>
<dbReference type="OpenTargets" id="ENSG00000163872"/>
<dbReference type="Orphanet" id="86814">
    <property type="disease" value="Familialadult myoclonic epilepsy"/>
</dbReference>
<dbReference type="PharmGKB" id="PA134922615"/>
<dbReference type="VEuPathDB" id="HostDB:ENSG00000163872"/>
<dbReference type="eggNOG" id="KOG3149">
    <property type="taxonomic scope" value="Eukaryota"/>
</dbReference>
<dbReference type="GeneTree" id="ENSGT00940000156789"/>
<dbReference type="HOGENOM" id="CLU_258270_0_0_1"/>
<dbReference type="InParanoid" id="Q9ULM3"/>
<dbReference type="OMA" id="SACKNFA"/>
<dbReference type="OrthoDB" id="1741717at2759"/>
<dbReference type="PAN-GO" id="Q9ULM3">
    <property type="GO annotations" value="5 GO annotations based on evolutionary models"/>
</dbReference>
<dbReference type="PhylomeDB" id="Q9ULM3"/>
<dbReference type="TreeFam" id="TF314586"/>
<dbReference type="PathwayCommons" id="Q9ULM3"/>
<dbReference type="Reactome" id="R-HSA-3214847">
    <property type="pathway name" value="HATs acetylate histones"/>
</dbReference>
<dbReference type="Reactome" id="R-HSA-9772755">
    <property type="pathway name" value="Formation of WDR5-containing histone-modifying complexes"/>
</dbReference>
<dbReference type="SignaLink" id="Q9ULM3"/>
<dbReference type="BioGRID-ORCS" id="55689">
    <property type="hits" value="380 hits in 1177 CRISPR screens"/>
</dbReference>
<dbReference type="CD-CODE" id="DEE660B4">
    <property type="entry name" value="Stress granule"/>
</dbReference>
<dbReference type="ChiTaRS" id="YEATS2">
    <property type="organism name" value="human"/>
</dbReference>
<dbReference type="GenomeRNAi" id="55689"/>
<dbReference type="Pharos" id="Q9ULM3">
    <property type="development level" value="Tbio"/>
</dbReference>
<dbReference type="PRO" id="PR:Q9ULM3"/>
<dbReference type="Proteomes" id="UP000005640">
    <property type="component" value="Chromosome 3"/>
</dbReference>
<dbReference type="RNAct" id="Q9ULM3">
    <property type="molecule type" value="protein"/>
</dbReference>
<dbReference type="Bgee" id="ENSG00000163872">
    <property type="expression patterns" value="Expressed in buccal mucosa cell and 197 other cell types or tissues"/>
</dbReference>
<dbReference type="ExpressionAtlas" id="Q9ULM3">
    <property type="expression patterns" value="baseline and differential"/>
</dbReference>
<dbReference type="GO" id="GO:0140672">
    <property type="term" value="C:ATAC complex"/>
    <property type="evidence" value="ECO:0000314"/>
    <property type="project" value="BHF-UCL"/>
</dbReference>
<dbReference type="GO" id="GO:0072686">
    <property type="term" value="C:mitotic spindle"/>
    <property type="evidence" value="ECO:0000303"/>
    <property type="project" value="ComplexPortal"/>
</dbReference>
<dbReference type="GO" id="GO:0035267">
    <property type="term" value="C:NuA4 histone acetyltransferase complex"/>
    <property type="evidence" value="ECO:0000318"/>
    <property type="project" value="GO_Central"/>
</dbReference>
<dbReference type="GO" id="GO:0005654">
    <property type="term" value="C:nucleoplasm"/>
    <property type="evidence" value="ECO:0000304"/>
    <property type="project" value="Reactome"/>
</dbReference>
<dbReference type="GO" id="GO:0005634">
    <property type="term" value="C:nucleus"/>
    <property type="evidence" value="ECO:0000318"/>
    <property type="project" value="GO_Central"/>
</dbReference>
<dbReference type="GO" id="GO:0042393">
    <property type="term" value="F:histone binding"/>
    <property type="evidence" value="ECO:0000314"/>
    <property type="project" value="UniProtKB"/>
</dbReference>
<dbReference type="GO" id="GO:0140566">
    <property type="term" value="F:histone reader activity"/>
    <property type="evidence" value="ECO:0000314"/>
    <property type="project" value="ARUK-UCL"/>
</dbReference>
<dbReference type="GO" id="GO:0140030">
    <property type="term" value="F:modification-dependent protein binding"/>
    <property type="evidence" value="ECO:0000314"/>
    <property type="project" value="UniProtKB"/>
</dbReference>
<dbReference type="GO" id="GO:0017025">
    <property type="term" value="F:TBP-class protein binding"/>
    <property type="evidence" value="ECO:0000353"/>
    <property type="project" value="BHF-UCL"/>
</dbReference>
<dbReference type="GO" id="GO:0003714">
    <property type="term" value="F:transcription corepressor activity"/>
    <property type="evidence" value="ECO:0000314"/>
    <property type="project" value="BHF-UCL"/>
</dbReference>
<dbReference type="GO" id="GO:0006338">
    <property type="term" value="P:chromatin remodeling"/>
    <property type="evidence" value="ECO:0000318"/>
    <property type="project" value="GO_Central"/>
</dbReference>
<dbReference type="GO" id="GO:0000122">
    <property type="term" value="P:negative regulation of transcription by RNA polymerase II"/>
    <property type="evidence" value="ECO:0000314"/>
    <property type="project" value="BHF-UCL"/>
</dbReference>
<dbReference type="GO" id="GO:0051726">
    <property type="term" value="P:regulation of cell cycle"/>
    <property type="evidence" value="ECO:0000315"/>
    <property type="project" value="ComplexPortal"/>
</dbReference>
<dbReference type="GO" id="GO:0051302">
    <property type="term" value="P:regulation of cell division"/>
    <property type="evidence" value="ECO:0000314"/>
    <property type="project" value="ComplexPortal"/>
</dbReference>
<dbReference type="GO" id="GO:0006355">
    <property type="term" value="P:regulation of DNA-templated transcription"/>
    <property type="evidence" value="ECO:0000315"/>
    <property type="project" value="ComplexPortal"/>
</dbReference>
<dbReference type="GO" id="GO:0045995">
    <property type="term" value="P:regulation of embryonic development"/>
    <property type="evidence" value="ECO:0000266"/>
    <property type="project" value="ComplexPortal"/>
</dbReference>
<dbReference type="GO" id="GO:0006357">
    <property type="term" value="P:regulation of transcription by RNA polymerase II"/>
    <property type="evidence" value="ECO:0000314"/>
    <property type="project" value="ComplexPortal"/>
</dbReference>
<dbReference type="CDD" id="cd16907">
    <property type="entry name" value="YEATS_YEATS2_like"/>
    <property type="match status" value="1"/>
</dbReference>
<dbReference type="FunFam" id="2.60.40.1970:FF:000001">
    <property type="entry name" value="YEATS domain containing 2"/>
    <property type="match status" value="1"/>
</dbReference>
<dbReference type="Gene3D" id="2.60.40.1970">
    <property type="entry name" value="YEATS domain"/>
    <property type="match status" value="1"/>
</dbReference>
<dbReference type="InterPro" id="IPR038704">
    <property type="entry name" value="YEAST_sf"/>
</dbReference>
<dbReference type="InterPro" id="IPR005033">
    <property type="entry name" value="YEATS"/>
</dbReference>
<dbReference type="InterPro" id="IPR055127">
    <property type="entry name" value="YEATS2_3HBD"/>
</dbReference>
<dbReference type="InterPro" id="IPR055129">
    <property type="entry name" value="YEATS_dom"/>
</dbReference>
<dbReference type="PANTHER" id="PTHR23195">
    <property type="entry name" value="YEATS DOMAIN"/>
    <property type="match status" value="1"/>
</dbReference>
<dbReference type="Pfam" id="PF22951">
    <property type="entry name" value="3HBD"/>
    <property type="match status" value="1"/>
</dbReference>
<dbReference type="Pfam" id="PF03366">
    <property type="entry name" value="YEATS"/>
    <property type="match status" value="1"/>
</dbReference>
<dbReference type="PROSITE" id="PS51037">
    <property type="entry name" value="YEATS"/>
    <property type="match status" value="1"/>
</dbReference>
<gene>
    <name evidence="14" type="primary">YEATS2</name>
    <name evidence="10" type="synonym">KIAA1197</name>
</gene>
<accession>Q9ULM3</accession>
<accession>A7E2B9</accession>
<accession>D3DNS9</accession>
<accession>Q641P6</accession>
<accession>Q9NW96</accession>
<keyword id="KW-0002">3D-structure</keyword>
<keyword id="KW-0175">Coiled coil</keyword>
<keyword id="KW-0887">Epilepsy</keyword>
<keyword id="KW-1017">Isopeptide bond</keyword>
<keyword id="KW-0539">Nucleus</keyword>
<keyword id="KW-0597">Phosphoprotein</keyword>
<keyword id="KW-1267">Proteomics identification</keyword>
<keyword id="KW-1185">Reference proteome</keyword>
<keyword id="KW-0832">Ubl conjugation</keyword>
<comment type="function">
    <text evidence="5 6 8">Chromatin reader component of the ATAC complex, a complex with histone acetyltransferase activity on histones H3 and H4 (PubMed:18838386, PubMed:19103755, PubMed:27103431). YEATS2 specifically recognizes and binds histone H3 crotonylated at 'Lys-27' (H3K27cr) (PubMed:27103431). Crotonylation marks active promoters and enhancers and confers resistance to transcriptional repressors (PubMed:27103431).</text>
</comment>
<comment type="subunit">
    <text evidence="5 6">Component of the ADA2A-containing complex (ATAC), composed of KAT14, KAT2A, TADA2L, TADA3L, ZZ3, MBIP, WDR5, YEATS2, SGF29 and DR1.</text>
</comment>
<comment type="subcellular location">
    <subcellularLocation>
        <location evidence="12 13">Nucleus</location>
    </subcellularLocation>
</comment>
<comment type="domain">
    <text evidence="8">The YEATS domain specifically recognizes and binds crotonylated histones.</text>
</comment>
<comment type="disease" evidence="7 9">
    <disease id="DI-05691">
        <name>Epilepsy, familial adult myoclonic, 4</name>
        <acronym>FAME4</acronym>
        <description>A form of familial myoclonic epilepsy, a neurologic disorder characterized by cortical hand tremors, myoclonic jerks and occasional generalized or focal seizures with a non-progressive or very slowly progressive disease course. Usually, myoclonic tremor is the presenting symptom, characterized by tremulous finger movements and myoclonic jerks of the limbs increased by action and posture. In a minority of patients, seizures are the presenting symptom. Some patients exhibit mild cognitive impairment. FAME4 inheritance is autosomal dominant.</description>
        <dbReference type="MIM" id="615127"/>
    </disease>
    <text>The disease is caused by variants affecting the gene represented in this entry.</text>
</comment>
<comment type="sequence caution" evidence="11">
    <conflict type="erroneous initiation">
        <sequence resource="EMBL-CDS" id="BAA86511"/>
    </conflict>
    <text>Extended N-terminus.</text>
</comment>
<reference key="1">
    <citation type="journal article" date="1999" name="DNA Res.">
        <title>Prediction of the coding sequences of unidentified human genes. XV. The complete sequences of 100 new cDNA clones from brain which code for large proteins in vitro.</title>
        <authorList>
            <person name="Nagase T."/>
            <person name="Ishikawa K."/>
            <person name="Kikuno R."/>
            <person name="Hirosawa M."/>
            <person name="Nomura N."/>
            <person name="Ohara O."/>
        </authorList>
    </citation>
    <scope>NUCLEOTIDE SEQUENCE [LARGE SCALE MRNA]</scope>
    <source>
        <tissue>Brain</tissue>
    </source>
</reference>
<reference key="2">
    <citation type="journal article" date="2006" name="Nature">
        <title>The DNA sequence, annotation and analysis of human chromosome 3.</title>
        <authorList>
            <person name="Muzny D.M."/>
            <person name="Scherer S.E."/>
            <person name="Kaul R."/>
            <person name="Wang J."/>
            <person name="Yu J."/>
            <person name="Sudbrak R."/>
            <person name="Buhay C.J."/>
            <person name="Chen R."/>
            <person name="Cree A."/>
            <person name="Ding Y."/>
            <person name="Dugan-Rocha S."/>
            <person name="Gill R."/>
            <person name="Gunaratne P."/>
            <person name="Harris R.A."/>
            <person name="Hawes A.C."/>
            <person name="Hernandez J."/>
            <person name="Hodgson A.V."/>
            <person name="Hume J."/>
            <person name="Jackson A."/>
            <person name="Khan Z.M."/>
            <person name="Kovar-Smith C."/>
            <person name="Lewis L.R."/>
            <person name="Lozado R.J."/>
            <person name="Metzker M.L."/>
            <person name="Milosavljevic A."/>
            <person name="Miner G.R."/>
            <person name="Morgan M.B."/>
            <person name="Nazareth L.V."/>
            <person name="Scott G."/>
            <person name="Sodergren E."/>
            <person name="Song X.-Z."/>
            <person name="Steffen D."/>
            <person name="Wei S."/>
            <person name="Wheeler D.A."/>
            <person name="Wright M.W."/>
            <person name="Worley K.C."/>
            <person name="Yuan Y."/>
            <person name="Zhang Z."/>
            <person name="Adams C.Q."/>
            <person name="Ansari-Lari M.A."/>
            <person name="Ayele M."/>
            <person name="Brown M.J."/>
            <person name="Chen G."/>
            <person name="Chen Z."/>
            <person name="Clendenning J."/>
            <person name="Clerc-Blankenburg K.P."/>
            <person name="Chen R."/>
            <person name="Chen Z."/>
            <person name="Davis C."/>
            <person name="Delgado O."/>
            <person name="Dinh H.H."/>
            <person name="Dong W."/>
            <person name="Draper H."/>
            <person name="Ernst S."/>
            <person name="Fu G."/>
            <person name="Gonzalez-Garay M.L."/>
            <person name="Garcia D.K."/>
            <person name="Gillett W."/>
            <person name="Gu J."/>
            <person name="Hao B."/>
            <person name="Haugen E."/>
            <person name="Havlak P."/>
            <person name="He X."/>
            <person name="Hennig S."/>
            <person name="Hu S."/>
            <person name="Huang W."/>
            <person name="Jackson L.R."/>
            <person name="Jacob L.S."/>
            <person name="Kelly S.H."/>
            <person name="Kube M."/>
            <person name="Levy R."/>
            <person name="Li Z."/>
            <person name="Liu B."/>
            <person name="Liu J."/>
            <person name="Liu W."/>
            <person name="Lu J."/>
            <person name="Maheshwari M."/>
            <person name="Nguyen B.-V."/>
            <person name="Okwuonu G.O."/>
            <person name="Palmeiri A."/>
            <person name="Pasternak S."/>
            <person name="Perez L.M."/>
            <person name="Phelps K.A."/>
            <person name="Plopper F.J."/>
            <person name="Qiang B."/>
            <person name="Raymond C."/>
            <person name="Rodriguez R."/>
            <person name="Saenphimmachak C."/>
            <person name="Santibanez J."/>
            <person name="Shen H."/>
            <person name="Shen Y."/>
            <person name="Subramanian S."/>
            <person name="Tabor P.E."/>
            <person name="Verduzco D."/>
            <person name="Waldron L."/>
            <person name="Wang J."/>
            <person name="Wang J."/>
            <person name="Wang Q."/>
            <person name="Williams G.A."/>
            <person name="Wong G.K.-S."/>
            <person name="Yao Z."/>
            <person name="Zhang J."/>
            <person name="Zhang X."/>
            <person name="Zhao G."/>
            <person name="Zhou J."/>
            <person name="Zhou Y."/>
            <person name="Nelson D."/>
            <person name="Lehrach H."/>
            <person name="Reinhardt R."/>
            <person name="Naylor S.L."/>
            <person name="Yang H."/>
            <person name="Olson M."/>
            <person name="Weinstock G."/>
            <person name="Gibbs R.A."/>
        </authorList>
    </citation>
    <scope>NUCLEOTIDE SEQUENCE [LARGE SCALE GENOMIC DNA]</scope>
</reference>
<reference key="3">
    <citation type="submission" date="2005-09" db="EMBL/GenBank/DDBJ databases">
        <authorList>
            <person name="Mural R.J."/>
            <person name="Istrail S."/>
            <person name="Sutton G.G."/>
            <person name="Florea L."/>
            <person name="Halpern A.L."/>
            <person name="Mobarry C.M."/>
            <person name="Lippert R."/>
            <person name="Walenz B."/>
            <person name="Shatkay H."/>
            <person name="Dew I."/>
            <person name="Miller J.R."/>
            <person name="Flanigan M.J."/>
            <person name="Edwards N.J."/>
            <person name="Bolanos R."/>
            <person name="Fasulo D."/>
            <person name="Halldorsson B.V."/>
            <person name="Hannenhalli S."/>
            <person name="Turner R."/>
            <person name="Yooseph S."/>
            <person name="Lu F."/>
            <person name="Nusskern D.R."/>
            <person name="Shue B.C."/>
            <person name="Zheng X.H."/>
            <person name="Zhong F."/>
            <person name="Delcher A.L."/>
            <person name="Huson D.H."/>
            <person name="Kravitz S.A."/>
            <person name="Mouchard L."/>
            <person name="Reinert K."/>
            <person name="Remington K.A."/>
            <person name="Clark A.G."/>
            <person name="Waterman M.S."/>
            <person name="Eichler E.E."/>
            <person name="Adams M.D."/>
            <person name="Hunkapiller M.W."/>
            <person name="Myers E.W."/>
            <person name="Venter J.C."/>
        </authorList>
    </citation>
    <scope>NUCLEOTIDE SEQUENCE [LARGE SCALE GENOMIC DNA]</scope>
</reference>
<reference key="4">
    <citation type="journal article" date="2004" name="Genome Res.">
        <title>The status, quality, and expansion of the NIH full-length cDNA project: the Mammalian Gene Collection (MGC).</title>
        <authorList>
            <consortium name="The MGC Project Team"/>
        </authorList>
    </citation>
    <scope>NUCLEOTIDE SEQUENCE [LARGE SCALE MRNA]</scope>
    <source>
        <tissue>Placenta</tissue>
    </source>
</reference>
<reference key="5">
    <citation type="journal article" date="2008" name="J. Biol. Chem.">
        <title>Human ATAC Is a GCN5/PCAF-containing acetylase complex with a novel NC2-like histone fold module that interacts with the TATA-binding protein.</title>
        <authorList>
            <person name="Wang Y.L."/>
            <person name="Faiola F."/>
            <person name="Xu M."/>
            <person name="Pan S."/>
            <person name="Martinez E."/>
        </authorList>
    </citation>
    <scope>FUNCTION</scope>
    <scope>IDENTIFICATION IN ATAC COMPLEX</scope>
</reference>
<reference key="6">
    <citation type="journal article" date="2008" name="Proc. Natl. Acad. Sci. U.S.A.">
        <title>A quantitative atlas of mitotic phosphorylation.</title>
        <authorList>
            <person name="Dephoure N."/>
            <person name="Zhou C."/>
            <person name="Villen J."/>
            <person name="Beausoleil S.A."/>
            <person name="Bakalarski C.E."/>
            <person name="Elledge S.J."/>
            <person name="Gygi S.P."/>
        </authorList>
    </citation>
    <scope>PHOSPHORYLATION [LARGE SCALE ANALYSIS] AT SER-118</scope>
    <scope>IDENTIFICATION BY MASS SPECTROMETRY [LARGE SCALE ANALYSIS]</scope>
    <source>
        <tissue>Cervix carcinoma</tissue>
    </source>
</reference>
<reference key="7">
    <citation type="journal article" date="2009" name="Anal. Chem.">
        <title>Lys-N and trypsin cover complementary parts of the phosphoproteome in a refined SCX-based approach.</title>
        <authorList>
            <person name="Gauci S."/>
            <person name="Helbig A.O."/>
            <person name="Slijper M."/>
            <person name="Krijgsveld J."/>
            <person name="Heck A.J."/>
            <person name="Mohammed S."/>
        </authorList>
    </citation>
    <scope>IDENTIFICATION BY MASS SPECTROMETRY [LARGE SCALE ANALYSIS]</scope>
</reference>
<reference key="8">
    <citation type="journal article" date="2009" name="Mol. Cell. Biol.">
        <title>The double-histone-acetyltransferase complex ATAC is essential for mammalian development.</title>
        <authorList>
            <person name="Guelman S."/>
            <person name="Kozuka K."/>
            <person name="Mao Y."/>
            <person name="Pham V."/>
            <person name="Solloway M.J."/>
            <person name="Wang J."/>
            <person name="Wu J."/>
            <person name="Lill J.R."/>
            <person name="Zha J."/>
        </authorList>
    </citation>
    <scope>FUNCTION</scope>
    <scope>IDENTIFICATION IN ATAC COMPLEX</scope>
</reference>
<reference key="9">
    <citation type="journal article" date="2009" name="Sci. Signal.">
        <title>Quantitative phosphoproteomic analysis of T cell receptor signaling reveals system-wide modulation of protein-protein interactions.</title>
        <authorList>
            <person name="Mayya V."/>
            <person name="Lundgren D.H."/>
            <person name="Hwang S.-I."/>
            <person name="Rezaul K."/>
            <person name="Wu L."/>
            <person name="Eng J.K."/>
            <person name="Rodionov V."/>
            <person name="Han D.K."/>
        </authorList>
    </citation>
    <scope>PHOSPHORYLATION [LARGE SCALE ANALYSIS] AT SER-536</scope>
    <scope>IDENTIFICATION BY MASS SPECTROMETRY [LARGE SCALE ANALYSIS]</scope>
    <source>
        <tissue>Leukemic T-cell</tissue>
    </source>
</reference>
<reference key="10">
    <citation type="journal article" date="2010" name="Sci. Signal.">
        <title>Quantitative phosphoproteomics reveals widespread full phosphorylation site occupancy during mitosis.</title>
        <authorList>
            <person name="Olsen J.V."/>
            <person name="Vermeulen M."/>
            <person name="Santamaria A."/>
            <person name="Kumar C."/>
            <person name="Miller M.L."/>
            <person name="Jensen L.J."/>
            <person name="Gnad F."/>
            <person name="Cox J."/>
            <person name="Jensen T.S."/>
            <person name="Nigg E.A."/>
            <person name="Brunak S."/>
            <person name="Mann M."/>
        </authorList>
    </citation>
    <scope>PHOSPHORYLATION [LARGE SCALE ANALYSIS] AT SER-447; SER-463; SER-465; SER-471; SER-473; SER-575 AND SER-627</scope>
    <scope>IDENTIFICATION BY MASS SPECTROMETRY [LARGE SCALE ANALYSIS]</scope>
    <source>
        <tissue>Cervix carcinoma</tissue>
    </source>
</reference>
<reference key="11">
    <citation type="journal article" date="2011" name="Sci. Signal.">
        <title>System-wide temporal characterization of the proteome and phosphoproteome of human embryonic stem cell differentiation.</title>
        <authorList>
            <person name="Rigbolt K.T."/>
            <person name="Prokhorova T.A."/>
            <person name="Akimov V."/>
            <person name="Henningsen J."/>
            <person name="Johansen P.T."/>
            <person name="Kratchmarova I."/>
            <person name="Kassem M."/>
            <person name="Mann M."/>
            <person name="Olsen J.V."/>
            <person name="Blagoev B."/>
        </authorList>
    </citation>
    <scope>PHOSPHORYLATION [LARGE SCALE ANALYSIS] AT SER-447 AND SER-536</scope>
    <scope>IDENTIFICATION BY MASS SPECTROMETRY [LARGE SCALE ANALYSIS]</scope>
</reference>
<reference key="12">
    <citation type="journal article" date="2013" name="J. Proteome Res.">
        <title>Toward a comprehensive characterization of a human cancer cell phosphoproteome.</title>
        <authorList>
            <person name="Zhou H."/>
            <person name="Di Palma S."/>
            <person name="Preisinger C."/>
            <person name="Peng M."/>
            <person name="Polat A.N."/>
            <person name="Heck A.J."/>
            <person name="Mohammed S."/>
        </authorList>
    </citation>
    <scope>PHOSPHORYLATION [LARGE SCALE ANALYSIS] AT SER-157; THR-407; SER-447; SER-465; SER-473; SER-536; SER-575; SER-627 AND THR-1219</scope>
    <scope>IDENTIFICATION BY MASS SPECTROMETRY [LARGE SCALE ANALYSIS]</scope>
    <source>
        <tissue>Cervix carcinoma</tissue>
        <tissue>Erythroleukemia</tissue>
    </source>
</reference>
<reference key="13">
    <citation type="journal article" date="2014" name="J. Proteomics">
        <title>An enzyme assisted RP-RPLC approach for in-depth analysis of human liver phosphoproteome.</title>
        <authorList>
            <person name="Bian Y."/>
            <person name="Song C."/>
            <person name="Cheng K."/>
            <person name="Dong M."/>
            <person name="Wang F."/>
            <person name="Huang J."/>
            <person name="Sun D."/>
            <person name="Wang L."/>
            <person name="Ye M."/>
            <person name="Zou H."/>
        </authorList>
    </citation>
    <scope>PHOSPHORYLATION [LARGE SCALE ANALYSIS] AT THR-478</scope>
    <scope>IDENTIFICATION BY MASS SPECTROMETRY [LARGE SCALE ANALYSIS]</scope>
    <source>
        <tissue>Liver</tissue>
    </source>
</reference>
<reference key="14">
    <citation type="journal article" date="2014" name="Proc. Natl. Acad. Sci. U.S.A.">
        <title>Mapping of SUMO sites and analysis of SUMOylation changes induced by external stimuli.</title>
        <authorList>
            <person name="Impens F."/>
            <person name="Radoshevich L."/>
            <person name="Cossart P."/>
            <person name="Ribet D."/>
        </authorList>
    </citation>
    <scope>SUMOYLATION [LARGE SCALE ANALYSIS] AT LYS-1110</scope>
    <scope>IDENTIFICATION BY MASS SPECTROMETRY [LARGE SCALE ANALYSIS]</scope>
</reference>
<reference key="15">
    <citation type="journal article" date="2015" name="Cell Rep.">
        <title>SUMO-2 orchestrates chromatin modifiers in response to DNA damage.</title>
        <authorList>
            <person name="Hendriks I.A."/>
            <person name="Treffers L.W."/>
            <person name="Verlaan-de Vries M."/>
            <person name="Olsen J.V."/>
            <person name="Vertegaal A.C."/>
        </authorList>
    </citation>
    <scope>SUMOYLATION [LARGE SCALE ANALYSIS] AT LYS-592 AND LYS-1110</scope>
    <scope>IDENTIFICATION BY MASS SPECTROMETRY [LARGE SCALE ANALYSIS]</scope>
</reference>
<reference key="16">
    <citation type="journal article" date="2017" name="Nat. Struct. Mol. Biol.">
        <title>Site-specific mapping of the human SUMO proteome reveals co-modification with phosphorylation.</title>
        <authorList>
            <person name="Hendriks I.A."/>
            <person name="Lyon D."/>
            <person name="Young C."/>
            <person name="Jensen L.J."/>
            <person name="Vertegaal A.C."/>
            <person name="Nielsen M.L."/>
        </authorList>
    </citation>
    <scope>SUMOYLATION [LARGE SCALE ANALYSIS] AT LYS-9; LYS-113; LYS-189; LYS-370; LYS-487; LYS-552; LYS-592; LYS-649; LYS-773; LYS-923; LYS-1110; LYS-1130; LYS-1222 AND LYS-1285</scope>
    <scope>IDENTIFICATION BY MASS SPECTROMETRY [LARGE SCALE ANALYSIS]</scope>
</reference>
<reference key="17">
    <citation type="journal article" date="2016" name="Cell Res.">
        <title>YEATS2 is a selective histone crotonylation reader.</title>
        <authorList>
            <person name="Zhao D."/>
            <person name="Guan H."/>
            <person name="Zhao S."/>
            <person name="Mi W."/>
            <person name="Wen H."/>
            <person name="Li Y."/>
            <person name="Zhao Y."/>
            <person name="Allis C.D."/>
            <person name="Shi X."/>
            <person name="Li H."/>
        </authorList>
    </citation>
    <scope>X-RAY CRYSTALLOGRAPHY (2.10 ANGSTROMS) OF 201-332 IN COMPLEX WITH H3K27CR PEPTIDE</scope>
    <scope>FUNCTION</scope>
    <scope>DOMAIN</scope>
    <scope>MUTAGENESIS OF HIS-259; SER-261; TYR-262; TRP-282; GLU-284; PHE-285 AND TYR-313</scope>
</reference>
<reference key="18">
    <citation type="journal article" date="2013" name="Eur. J. Hum. Genet.">
        <title>A newly identified locus for benign adult familial myoclonic epilepsy on chromosome 3q26.32-3q28.</title>
        <authorList>
            <person name="Yeetong P."/>
            <person name="Ausavarat S."/>
            <person name="Bhidayasiri R."/>
            <person name="Piravej K."/>
            <person name="Pasutharnchat N."/>
            <person name="Desudchit T."/>
            <person name="Chunharas C."/>
            <person name="Loplumlert J."/>
            <person name="Limotai C."/>
            <person name="Suphapeetiporn K."/>
            <person name="Shotelersuk V."/>
        </authorList>
    </citation>
    <scope>INVOLVEMENT IN FAME4</scope>
</reference>
<reference key="19">
    <citation type="journal article" date="2019" name="Brain">
        <title>TTTCA repeat insertions in an intron of YEATS2 in benign adult familial myoclonic epilepsy type 4.</title>
        <authorList>
            <person name="Yeetong P."/>
            <person name="Pongpanich M."/>
            <person name="Srichomthong C."/>
            <person name="Assawapitaksakul A."/>
            <person name="Shotelersuk V."/>
            <person name="Tantirukdham N."/>
            <person name="Chunharas C."/>
            <person name="Suphapeetiporn K."/>
            <person name="Shotelersuk V."/>
        </authorList>
    </citation>
    <scope>INVOLVEMENT IN FAME4</scope>
</reference>
<evidence type="ECO:0000250" key="1">
    <source>
        <dbReference type="UniProtKB" id="Q3TUF7"/>
    </source>
</evidence>
<evidence type="ECO:0000255" key="2"/>
<evidence type="ECO:0000255" key="3">
    <source>
        <dbReference type="PROSITE-ProRule" id="PRU00376"/>
    </source>
</evidence>
<evidence type="ECO:0000256" key="4">
    <source>
        <dbReference type="SAM" id="MobiDB-lite"/>
    </source>
</evidence>
<evidence type="ECO:0000269" key="5">
    <source>
    </source>
</evidence>
<evidence type="ECO:0000269" key="6">
    <source>
    </source>
</evidence>
<evidence type="ECO:0000269" key="7">
    <source>
    </source>
</evidence>
<evidence type="ECO:0000269" key="8">
    <source>
    </source>
</evidence>
<evidence type="ECO:0000269" key="9">
    <source>
    </source>
</evidence>
<evidence type="ECO:0000303" key="10">
    <source>
    </source>
</evidence>
<evidence type="ECO:0000305" key="11"/>
<evidence type="ECO:0000305" key="12">
    <source>
    </source>
</evidence>
<evidence type="ECO:0000305" key="13">
    <source>
    </source>
</evidence>
<evidence type="ECO:0000312" key="14">
    <source>
        <dbReference type="HGNC" id="HGNC:25489"/>
    </source>
</evidence>
<evidence type="ECO:0007744" key="15">
    <source>
        <dbReference type="PDB" id="5IQL"/>
    </source>
</evidence>
<evidence type="ECO:0007744" key="16">
    <source>
    </source>
</evidence>
<evidence type="ECO:0007744" key="17">
    <source>
    </source>
</evidence>
<evidence type="ECO:0007744" key="18">
    <source>
    </source>
</evidence>
<evidence type="ECO:0007744" key="19">
    <source>
    </source>
</evidence>
<evidence type="ECO:0007744" key="20">
    <source>
    </source>
</evidence>
<evidence type="ECO:0007744" key="21">
    <source>
    </source>
</evidence>
<evidence type="ECO:0007744" key="22">
    <source>
    </source>
</evidence>
<evidence type="ECO:0007744" key="23">
    <source>
    </source>
</evidence>
<evidence type="ECO:0007744" key="24">
    <source>
    </source>
</evidence>
<evidence type="ECO:0007829" key="25">
    <source>
        <dbReference type="PDB" id="7EIE"/>
    </source>
</evidence>
<proteinExistence type="evidence at protein level"/>